<feature type="chain" id="PRO_0000349579" description="tRNA-specific 2-thiouridylase MnmA">
    <location>
        <begin position="1"/>
        <end position="359"/>
    </location>
</feature>
<feature type="region of interest" description="Interaction with tRNA" evidence="1">
    <location>
        <begin position="148"/>
        <end position="150"/>
    </location>
</feature>
<feature type="active site" description="Nucleophile" evidence="1">
    <location>
        <position position="101"/>
    </location>
</feature>
<feature type="active site" description="Cysteine persulfide intermediate" evidence="1">
    <location>
        <position position="198"/>
    </location>
</feature>
<feature type="binding site" evidence="1">
    <location>
        <begin position="7"/>
        <end position="14"/>
    </location>
    <ligand>
        <name>ATP</name>
        <dbReference type="ChEBI" id="CHEBI:30616"/>
    </ligand>
</feature>
<feature type="binding site" evidence="1">
    <location>
        <position position="33"/>
    </location>
    <ligand>
        <name>ATP</name>
        <dbReference type="ChEBI" id="CHEBI:30616"/>
    </ligand>
</feature>
<feature type="binding site" evidence="1">
    <location>
        <position position="125"/>
    </location>
    <ligand>
        <name>ATP</name>
        <dbReference type="ChEBI" id="CHEBI:30616"/>
    </ligand>
</feature>
<feature type="site" description="Interaction with tRNA" evidence="1">
    <location>
        <position position="126"/>
    </location>
</feature>
<feature type="site" description="Interaction with tRNA" evidence="1">
    <location>
        <position position="337"/>
    </location>
</feature>
<feature type="disulfide bond" description="Alternate" evidence="1">
    <location>
        <begin position="101"/>
        <end position="198"/>
    </location>
</feature>
<keyword id="KW-0067">ATP-binding</keyword>
<keyword id="KW-0963">Cytoplasm</keyword>
<keyword id="KW-1015">Disulfide bond</keyword>
<keyword id="KW-0547">Nucleotide-binding</keyword>
<keyword id="KW-1185">Reference proteome</keyword>
<keyword id="KW-0694">RNA-binding</keyword>
<keyword id="KW-0808">Transferase</keyword>
<keyword id="KW-0819">tRNA processing</keyword>
<keyword id="KW-0820">tRNA-binding</keyword>
<proteinExistence type="inferred from homology"/>
<name>MNMA_CHLAA</name>
<organism>
    <name type="scientific">Chloroflexus aurantiacus (strain ATCC 29366 / DSM 635 / J-10-fl)</name>
    <dbReference type="NCBI Taxonomy" id="324602"/>
    <lineage>
        <taxon>Bacteria</taxon>
        <taxon>Bacillati</taxon>
        <taxon>Chloroflexota</taxon>
        <taxon>Chloroflexia</taxon>
        <taxon>Chloroflexales</taxon>
        <taxon>Chloroflexineae</taxon>
        <taxon>Chloroflexaceae</taxon>
        <taxon>Chloroflexus</taxon>
    </lineage>
</organism>
<dbReference type="EC" id="2.8.1.13" evidence="1"/>
<dbReference type="EMBL" id="CP000909">
    <property type="protein sequence ID" value="ABY33910.1"/>
    <property type="molecule type" value="Genomic_DNA"/>
</dbReference>
<dbReference type="RefSeq" id="WP_012256566.1">
    <property type="nucleotide sequence ID" value="NC_010175.1"/>
</dbReference>
<dbReference type="RefSeq" id="YP_001634299.1">
    <property type="nucleotide sequence ID" value="NC_010175.1"/>
</dbReference>
<dbReference type="SMR" id="A9WFH2"/>
<dbReference type="FunCoup" id="A9WFH2">
    <property type="interactions" value="453"/>
</dbReference>
<dbReference type="STRING" id="324602.Caur_0670"/>
<dbReference type="EnsemblBacteria" id="ABY33910">
    <property type="protein sequence ID" value="ABY33910"/>
    <property type="gene ID" value="Caur_0670"/>
</dbReference>
<dbReference type="KEGG" id="cau:Caur_0670"/>
<dbReference type="PATRIC" id="fig|324602.8.peg.765"/>
<dbReference type="eggNOG" id="COG0482">
    <property type="taxonomic scope" value="Bacteria"/>
</dbReference>
<dbReference type="HOGENOM" id="CLU_035188_0_0_0"/>
<dbReference type="InParanoid" id="A9WFH2"/>
<dbReference type="Proteomes" id="UP000002008">
    <property type="component" value="Chromosome"/>
</dbReference>
<dbReference type="GO" id="GO:0005737">
    <property type="term" value="C:cytoplasm"/>
    <property type="evidence" value="ECO:0007669"/>
    <property type="project" value="UniProtKB-SubCell"/>
</dbReference>
<dbReference type="GO" id="GO:0005524">
    <property type="term" value="F:ATP binding"/>
    <property type="evidence" value="ECO:0007669"/>
    <property type="project" value="UniProtKB-KW"/>
</dbReference>
<dbReference type="GO" id="GO:0000049">
    <property type="term" value="F:tRNA binding"/>
    <property type="evidence" value="ECO:0007669"/>
    <property type="project" value="UniProtKB-KW"/>
</dbReference>
<dbReference type="GO" id="GO:0103016">
    <property type="term" value="F:tRNA-uridine 2-sulfurtransferase activity"/>
    <property type="evidence" value="ECO:0007669"/>
    <property type="project" value="UniProtKB-EC"/>
</dbReference>
<dbReference type="GO" id="GO:0002143">
    <property type="term" value="P:tRNA wobble position uridine thiolation"/>
    <property type="evidence" value="ECO:0000318"/>
    <property type="project" value="GO_Central"/>
</dbReference>
<dbReference type="CDD" id="cd01998">
    <property type="entry name" value="MnmA_TRMU-like"/>
    <property type="match status" value="1"/>
</dbReference>
<dbReference type="FunFam" id="2.30.30.280:FF:000001">
    <property type="entry name" value="tRNA-specific 2-thiouridylase MnmA"/>
    <property type="match status" value="1"/>
</dbReference>
<dbReference type="FunFam" id="2.40.30.10:FF:000127">
    <property type="entry name" value="tRNA-specific 2-thiouridylase MnmA"/>
    <property type="match status" value="1"/>
</dbReference>
<dbReference type="FunFam" id="3.40.50.620:FF:000115">
    <property type="entry name" value="tRNA-specific 2-thiouridylase MnmA"/>
    <property type="match status" value="1"/>
</dbReference>
<dbReference type="Gene3D" id="2.30.30.280">
    <property type="entry name" value="Adenine nucleotide alpha hydrolases-like domains"/>
    <property type="match status" value="1"/>
</dbReference>
<dbReference type="Gene3D" id="3.40.50.620">
    <property type="entry name" value="HUPs"/>
    <property type="match status" value="1"/>
</dbReference>
<dbReference type="Gene3D" id="2.40.30.10">
    <property type="entry name" value="Translation factors"/>
    <property type="match status" value="1"/>
</dbReference>
<dbReference type="HAMAP" id="MF_00144">
    <property type="entry name" value="tRNA_thiouridyl_MnmA"/>
    <property type="match status" value="1"/>
</dbReference>
<dbReference type="InterPro" id="IPR004506">
    <property type="entry name" value="MnmA-like"/>
</dbReference>
<dbReference type="InterPro" id="IPR046885">
    <property type="entry name" value="MnmA-like_C"/>
</dbReference>
<dbReference type="InterPro" id="IPR046884">
    <property type="entry name" value="MnmA-like_central"/>
</dbReference>
<dbReference type="InterPro" id="IPR023382">
    <property type="entry name" value="MnmA-like_central_sf"/>
</dbReference>
<dbReference type="InterPro" id="IPR014729">
    <property type="entry name" value="Rossmann-like_a/b/a_fold"/>
</dbReference>
<dbReference type="NCBIfam" id="NF001138">
    <property type="entry name" value="PRK00143.1"/>
    <property type="match status" value="1"/>
</dbReference>
<dbReference type="NCBIfam" id="TIGR00420">
    <property type="entry name" value="trmU"/>
    <property type="match status" value="1"/>
</dbReference>
<dbReference type="PANTHER" id="PTHR11933:SF5">
    <property type="entry name" value="MITOCHONDRIAL TRNA-SPECIFIC 2-THIOURIDYLASE 1"/>
    <property type="match status" value="1"/>
</dbReference>
<dbReference type="PANTHER" id="PTHR11933">
    <property type="entry name" value="TRNA 5-METHYLAMINOMETHYL-2-THIOURIDYLATE -METHYLTRANSFERASE"/>
    <property type="match status" value="1"/>
</dbReference>
<dbReference type="Pfam" id="PF03054">
    <property type="entry name" value="tRNA_Me_trans"/>
    <property type="match status" value="1"/>
</dbReference>
<dbReference type="Pfam" id="PF20258">
    <property type="entry name" value="tRNA_Me_trans_C"/>
    <property type="match status" value="1"/>
</dbReference>
<dbReference type="Pfam" id="PF20259">
    <property type="entry name" value="tRNA_Me_trans_M"/>
    <property type="match status" value="1"/>
</dbReference>
<dbReference type="SUPFAM" id="SSF52402">
    <property type="entry name" value="Adenine nucleotide alpha hydrolases-like"/>
    <property type="match status" value="1"/>
</dbReference>
<gene>
    <name evidence="1" type="primary">mnmA</name>
    <name type="ordered locus">Caur_0670</name>
</gene>
<reference key="1">
    <citation type="journal article" date="2011" name="BMC Genomics">
        <title>Complete genome sequence of the filamentous anoxygenic phototrophic bacterium Chloroflexus aurantiacus.</title>
        <authorList>
            <person name="Tang K.H."/>
            <person name="Barry K."/>
            <person name="Chertkov O."/>
            <person name="Dalin E."/>
            <person name="Han C.S."/>
            <person name="Hauser L.J."/>
            <person name="Honchak B.M."/>
            <person name="Karbach L.E."/>
            <person name="Land M.L."/>
            <person name="Lapidus A."/>
            <person name="Larimer F.W."/>
            <person name="Mikhailova N."/>
            <person name="Pitluck S."/>
            <person name="Pierson B.K."/>
            <person name="Blankenship R.E."/>
        </authorList>
    </citation>
    <scope>NUCLEOTIDE SEQUENCE [LARGE SCALE GENOMIC DNA]</scope>
    <source>
        <strain>ATCC 29366 / DSM 635 / J-10-fl</strain>
    </source>
</reference>
<sequence length="359" mass="39632">MANVLVAMSGGVDSSLAAALLLEAGHQVTGVTMHLWDDDEQGLRESLCCAAEAAASARRVCALLGIPFYVFNYQREFRRHVIDYFIRAYTHGLTPNPCVECNRMIKFRALLDRARTLGFDAVATGHYARIIQGEDGRYQLWRAVDLEKDQSYMLHMLGQAELSRLIFPIGAYTKREVREMAAARGLPSADREESQDICFVPDGDYRNLLRIESPESLVPGPIVDLEGREIGRHRGLPLYTVGQRRGLGLGGGEPRYVVAIDPARNALIVGPAAALNRARFTVIDACWVDDAPPAESFTCLVQVRAHAEPLPARVSQQPDGRWLVELERPQRAVSPGQAAVFYRGQQVLGGGWIARPEVA</sequence>
<accession>A9WFH2</accession>
<evidence type="ECO:0000255" key="1">
    <source>
        <dbReference type="HAMAP-Rule" id="MF_00144"/>
    </source>
</evidence>
<protein>
    <recommendedName>
        <fullName evidence="1">tRNA-specific 2-thiouridylase MnmA</fullName>
        <ecNumber evidence="1">2.8.1.13</ecNumber>
    </recommendedName>
</protein>
<comment type="function">
    <text evidence="1">Catalyzes the 2-thiolation of uridine at the wobble position (U34) of tRNA, leading to the formation of s(2)U34.</text>
</comment>
<comment type="catalytic activity">
    <reaction evidence="1">
        <text>S-sulfanyl-L-cysteinyl-[protein] + uridine(34) in tRNA + AH2 + ATP = 2-thiouridine(34) in tRNA + L-cysteinyl-[protein] + A + AMP + diphosphate + H(+)</text>
        <dbReference type="Rhea" id="RHEA:47032"/>
        <dbReference type="Rhea" id="RHEA-COMP:10131"/>
        <dbReference type="Rhea" id="RHEA-COMP:11726"/>
        <dbReference type="Rhea" id="RHEA-COMP:11727"/>
        <dbReference type="Rhea" id="RHEA-COMP:11728"/>
        <dbReference type="ChEBI" id="CHEBI:13193"/>
        <dbReference type="ChEBI" id="CHEBI:15378"/>
        <dbReference type="ChEBI" id="CHEBI:17499"/>
        <dbReference type="ChEBI" id="CHEBI:29950"/>
        <dbReference type="ChEBI" id="CHEBI:30616"/>
        <dbReference type="ChEBI" id="CHEBI:33019"/>
        <dbReference type="ChEBI" id="CHEBI:61963"/>
        <dbReference type="ChEBI" id="CHEBI:65315"/>
        <dbReference type="ChEBI" id="CHEBI:87170"/>
        <dbReference type="ChEBI" id="CHEBI:456215"/>
        <dbReference type="EC" id="2.8.1.13"/>
    </reaction>
</comment>
<comment type="subcellular location">
    <subcellularLocation>
        <location evidence="1">Cytoplasm</location>
    </subcellularLocation>
</comment>
<comment type="similarity">
    <text evidence="1">Belongs to the MnmA/TRMU family.</text>
</comment>